<feature type="chain" id="PRO_1000135669" description="3-isopropylmalate dehydratase large subunit">
    <location>
        <begin position="1"/>
        <end position="464"/>
    </location>
</feature>
<feature type="binding site" evidence="1">
    <location>
        <position position="337"/>
    </location>
    <ligand>
        <name>[4Fe-4S] cluster</name>
        <dbReference type="ChEBI" id="CHEBI:49883"/>
    </ligand>
</feature>
<feature type="binding site" evidence="1">
    <location>
        <position position="397"/>
    </location>
    <ligand>
        <name>[4Fe-4S] cluster</name>
        <dbReference type="ChEBI" id="CHEBI:49883"/>
    </ligand>
</feature>
<feature type="binding site" evidence="1">
    <location>
        <position position="400"/>
    </location>
    <ligand>
        <name>[4Fe-4S] cluster</name>
        <dbReference type="ChEBI" id="CHEBI:49883"/>
    </ligand>
</feature>
<comment type="function">
    <text evidence="1">Catalyzes the isomerization between 2-isopropylmalate and 3-isopropylmalate, via the formation of 2-isopropylmaleate.</text>
</comment>
<comment type="catalytic activity">
    <reaction evidence="1">
        <text>(2R,3S)-3-isopropylmalate = (2S)-2-isopropylmalate</text>
        <dbReference type="Rhea" id="RHEA:32287"/>
        <dbReference type="ChEBI" id="CHEBI:1178"/>
        <dbReference type="ChEBI" id="CHEBI:35121"/>
        <dbReference type="EC" id="4.2.1.33"/>
    </reaction>
</comment>
<comment type="cofactor">
    <cofactor evidence="1">
        <name>[4Fe-4S] cluster</name>
        <dbReference type="ChEBI" id="CHEBI:49883"/>
    </cofactor>
    <text evidence="1">Binds 1 [4Fe-4S] cluster per subunit.</text>
</comment>
<comment type="pathway">
    <text evidence="1">Amino-acid biosynthesis; L-leucine biosynthesis; L-leucine from 3-methyl-2-oxobutanoate: step 2/4.</text>
</comment>
<comment type="subunit">
    <text evidence="1">Heterodimer of LeuC and LeuD.</text>
</comment>
<comment type="similarity">
    <text evidence="1">Belongs to the aconitase/IPM isomerase family. LeuC type 1 subfamily.</text>
</comment>
<name>LEUC_BACC7</name>
<organism>
    <name type="scientific">Bacillus cereus (strain AH187)</name>
    <dbReference type="NCBI Taxonomy" id="405534"/>
    <lineage>
        <taxon>Bacteria</taxon>
        <taxon>Bacillati</taxon>
        <taxon>Bacillota</taxon>
        <taxon>Bacilli</taxon>
        <taxon>Bacillales</taxon>
        <taxon>Bacillaceae</taxon>
        <taxon>Bacillus</taxon>
        <taxon>Bacillus cereus group</taxon>
    </lineage>
</organism>
<sequence length="464" mass="51426">MGKRLLDKLWERHVVATNENGLDLLYIDLHLVHEVTSPQAFEGLRLTNRTVRRPDLTFATMDHNIPTKDVWNITDRIAKQQLDTLRENCKQFQVPLADIGDEEQGIVHVIGPELGLTQPGKTIVCGDSHTATHGAFGALAFGIGTSEVEHVLATQTLWQRKPKAMGIELKGKLQKGVYAKDIILHLLSKYGVAVGTGYVMEFYGETIQAMEMEERMTLCNMAIEGGAKAGIIAPDEKTVAYVKGRKYAPRDYETFEKKWFELYTDADAIYDLHISIDVTDLAPYVTWGTNPSMGVRIDEKLPEKHDVNDERAFSYMGLSPGQSTYDIPVQHVFIGSCTNSRLSDLEIAAAVVKGRKVKEGVRALVVPGSKRVRDAAMQKGLHHIFEEAGFEWREPGCSMCLGMNPDQVPEGEHCASTSNRNFEGRQGKGARTHLVSPAMAAAAALYGHFVDTRKESYDGAISYS</sequence>
<dbReference type="EC" id="4.2.1.33" evidence="1"/>
<dbReference type="EMBL" id="CP001177">
    <property type="protein sequence ID" value="ACJ77321.1"/>
    <property type="molecule type" value="Genomic_DNA"/>
</dbReference>
<dbReference type="SMR" id="B7HKC6"/>
<dbReference type="KEGG" id="bcr:BCAH187_A1561"/>
<dbReference type="HOGENOM" id="CLU_006714_3_4_9"/>
<dbReference type="UniPathway" id="UPA00048">
    <property type="reaction ID" value="UER00071"/>
</dbReference>
<dbReference type="Proteomes" id="UP000002214">
    <property type="component" value="Chromosome"/>
</dbReference>
<dbReference type="GO" id="GO:0003861">
    <property type="term" value="F:3-isopropylmalate dehydratase activity"/>
    <property type="evidence" value="ECO:0007669"/>
    <property type="project" value="UniProtKB-UniRule"/>
</dbReference>
<dbReference type="GO" id="GO:0051539">
    <property type="term" value="F:4 iron, 4 sulfur cluster binding"/>
    <property type="evidence" value="ECO:0007669"/>
    <property type="project" value="UniProtKB-KW"/>
</dbReference>
<dbReference type="GO" id="GO:0046872">
    <property type="term" value="F:metal ion binding"/>
    <property type="evidence" value="ECO:0007669"/>
    <property type="project" value="UniProtKB-KW"/>
</dbReference>
<dbReference type="GO" id="GO:0009098">
    <property type="term" value="P:L-leucine biosynthetic process"/>
    <property type="evidence" value="ECO:0007669"/>
    <property type="project" value="UniProtKB-UniRule"/>
</dbReference>
<dbReference type="CDD" id="cd01583">
    <property type="entry name" value="IPMI"/>
    <property type="match status" value="1"/>
</dbReference>
<dbReference type="FunFam" id="3.30.499.10:FF:000007">
    <property type="entry name" value="3-isopropylmalate dehydratase large subunit"/>
    <property type="match status" value="1"/>
</dbReference>
<dbReference type="Gene3D" id="3.30.499.10">
    <property type="entry name" value="Aconitase, domain 3"/>
    <property type="match status" value="2"/>
</dbReference>
<dbReference type="HAMAP" id="MF_01026">
    <property type="entry name" value="LeuC_type1"/>
    <property type="match status" value="1"/>
</dbReference>
<dbReference type="InterPro" id="IPR004430">
    <property type="entry name" value="3-IsopropMal_deHydase_lsu"/>
</dbReference>
<dbReference type="InterPro" id="IPR015931">
    <property type="entry name" value="Acnase/IPM_dHydase_lsu_aba_1/3"/>
</dbReference>
<dbReference type="InterPro" id="IPR001030">
    <property type="entry name" value="Acoase/IPM_deHydtase_lsu_aba"/>
</dbReference>
<dbReference type="InterPro" id="IPR018136">
    <property type="entry name" value="Aconitase_4Fe-4S_BS"/>
</dbReference>
<dbReference type="InterPro" id="IPR036008">
    <property type="entry name" value="Aconitase_4Fe-4S_dom"/>
</dbReference>
<dbReference type="InterPro" id="IPR050067">
    <property type="entry name" value="IPM_dehydratase_rel_enz"/>
</dbReference>
<dbReference type="InterPro" id="IPR033941">
    <property type="entry name" value="IPMI_cat"/>
</dbReference>
<dbReference type="NCBIfam" id="TIGR00170">
    <property type="entry name" value="leuC"/>
    <property type="match status" value="1"/>
</dbReference>
<dbReference type="NCBIfam" id="NF004016">
    <property type="entry name" value="PRK05478.1"/>
    <property type="match status" value="1"/>
</dbReference>
<dbReference type="NCBIfam" id="NF009116">
    <property type="entry name" value="PRK12466.1"/>
    <property type="match status" value="1"/>
</dbReference>
<dbReference type="PANTHER" id="PTHR43822:SF9">
    <property type="entry name" value="3-ISOPROPYLMALATE DEHYDRATASE"/>
    <property type="match status" value="1"/>
</dbReference>
<dbReference type="PANTHER" id="PTHR43822">
    <property type="entry name" value="HOMOACONITASE, MITOCHONDRIAL-RELATED"/>
    <property type="match status" value="1"/>
</dbReference>
<dbReference type="Pfam" id="PF00330">
    <property type="entry name" value="Aconitase"/>
    <property type="match status" value="1"/>
</dbReference>
<dbReference type="PRINTS" id="PR00415">
    <property type="entry name" value="ACONITASE"/>
</dbReference>
<dbReference type="SUPFAM" id="SSF53732">
    <property type="entry name" value="Aconitase iron-sulfur domain"/>
    <property type="match status" value="1"/>
</dbReference>
<dbReference type="PROSITE" id="PS00450">
    <property type="entry name" value="ACONITASE_1"/>
    <property type="match status" value="1"/>
</dbReference>
<dbReference type="PROSITE" id="PS01244">
    <property type="entry name" value="ACONITASE_2"/>
    <property type="match status" value="1"/>
</dbReference>
<proteinExistence type="inferred from homology"/>
<reference key="1">
    <citation type="submission" date="2008-10" db="EMBL/GenBank/DDBJ databases">
        <title>Genome sequence of Bacillus cereus AH187.</title>
        <authorList>
            <person name="Dodson R.J."/>
            <person name="Durkin A.S."/>
            <person name="Rosovitz M.J."/>
            <person name="Rasko D.A."/>
            <person name="Kolsto A.B."/>
            <person name="Okstad O.A."/>
            <person name="Ravel J."/>
            <person name="Sutton G."/>
        </authorList>
    </citation>
    <scope>NUCLEOTIDE SEQUENCE [LARGE SCALE GENOMIC DNA]</scope>
    <source>
        <strain>AH187</strain>
    </source>
</reference>
<gene>
    <name evidence="1" type="primary">leuC</name>
    <name type="ordered locus">BCAH187_A1561</name>
</gene>
<keyword id="KW-0004">4Fe-4S</keyword>
<keyword id="KW-0028">Amino-acid biosynthesis</keyword>
<keyword id="KW-0100">Branched-chain amino acid biosynthesis</keyword>
<keyword id="KW-0408">Iron</keyword>
<keyword id="KW-0411">Iron-sulfur</keyword>
<keyword id="KW-0432">Leucine biosynthesis</keyword>
<keyword id="KW-0456">Lyase</keyword>
<keyword id="KW-0479">Metal-binding</keyword>
<evidence type="ECO:0000255" key="1">
    <source>
        <dbReference type="HAMAP-Rule" id="MF_01026"/>
    </source>
</evidence>
<accession>B7HKC6</accession>
<protein>
    <recommendedName>
        <fullName evidence="1">3-isopropylmalate dehydratase large subunit</fullName>
        <ecNumber evidence="1">4.2.1.33</ecNumber>
    </recommendedName>
    <alternativeName>
        <fullName evidence="1">Alpha-IPM isomerase</fullName>
        <shortName evidence="1">IPMI</shortName>
    </alternativeName>
    <alternativeName>
        <fullName evidence="1">Isopropylmalate isomerase</fullName>
    </alternativeName>
</protein>